<comment type="function">
    <text evidence="1">Catalyzes the acylation of glycosyl-4,4'-diaponeurosporenoate, i.e. the esterification of glucose at the C6'' position with the carboxyl group of the C(15) fatty acid 12-methyltetradecanoic acid, to yield staphyloxanthin. This is the last step in the biosynthesis of this orange pigment, present in most staphylococci strains (By similarity).</text>
</comment>
<comment type="pathway">
    <text>Carotenoid biosynthesis; staphyloxanthin biosynthesis; staphyloxanthin from farnesyl diphosphate: step 5/5.</text>
</comment>
<comment type="subcellular location">
    <subcellularLocation>
        <location evidence="3">Cell membrane</location>
        <topology evidence="3">Single-pass membrane protein</topology>
    </subcellularLocation>
</comment>
<comment type="similarity">
    <text evidence="3">Belongs to the acyltransferase CrtO family.</text>
</comment>
<proteinExistence type="inferred from homology"/>
<feature type="signal peptide" evidence="2">
    <location>
        <begin position="1"/>
        <end position="28"/>
    </location>
</feature>
<feature type="chain" id="PRO_0000284850" description="Glycosyl-4,4'-diaponeurosporenoate acyltransferase">
    <location>
        <begin position="29"/>
        <end position="165"/>
    </location>
</feature>
<feature type="transmembrane region" description="Helical" evidence="2">
    <location>
        <begin position="126"/>
        <end position="145"/>
    </location>
</feature>
<evidence type="ECO:0000250" key="1"/>
<evidence type="ECO:0000255" key="2"/>
<evidence type="ECO:0000305" key="3"/>
<reference key="1">
    <citation type="journal article" date="2004" name="Proc. Natl. Acad. Sci. U.S.A.">
        <title>Complete genomes of two clinical Staphylococcus aureus strains: evidence for the rapid evolution of virulence and drug resistance.</title>
        <authorList>
            <person name="Holden M.T.G."/>
            <person name="Feil E.J."/>
            <person name="Lindsay J.A."/>
            <person name="Peacock S.J."/>
            <person name="Day N.P.J."/>
            <person name="Enright M.C."/>
            <person name="Foster T.J."/>
            <person name="Moore C.E."/>
            <person name="Hurst L."/>
            <person name="Atkin R."/>
            <person name="Barron A."/>
            <person name="Bason N."/>
            <person name="Bentley S.D."/>
            <person name="Chillingworth C."/>
            <person name="Chillingworth T."/>
            <person name="Churcher C."/>
            <person name="Clark L."/>
            <person name="Corton C."/>
            <person name="Cronin A."/>
            <person name="Doggett J."/>
            <person name="Dowd L."/>
            <person name="Feltwell T."/>
            <person name="Hance Z."/>
            <person name="Harris B."/>
            <person name="Hauser H."/>
            <person name="Holroyd S."/>
            <person name="Jagels K."/>
            <person name="James K.D."/>
            <person name="Lennard N."/>
            <person name="Line A."/>
            <person name="Mayes R."/>
            <person name="Moule S."/>
            <person name="Mungall K."/>
            <person name="Ormond D."/>
            <person name="Quail M.A."/>
            <person name="Rabbinowitsch E."/>
            <person name="Rutherford K.M."/>
            <person name="Sanders M."/>
            <person name="Sharp S."/>
            <person name="Simmonds M."/>
            <person name="Stevens K."/>
            <person name="Whitehead S."/>
            <person name="Barrell B.G."/>
            <person name="Spratt B.G."/>
            <person name="Parkhill J."/>
        </authorList>
    </citation>
    <scope>NUCLEOTIDE SEQUENCE [LARGE SCALE GENOMIC DNA]</scope>
    <source>
        <strain>MSSA476</strain>
    </source>
</reference>
<protein>
    <recommendedName>
        <fullName>Glycosyl-4,4'-diaponeurosporenoate acyltransferase</fullName>
        <ecNumber>2.3.1.-</ecNumber>
    </recommendedName>
</protein>
<keyword id="KW-0012">Acyltransferase</keyword>
<keyword id="KW-0125">Carotenoid biosynthesis</keyword>
<keyword id="KW-1003">Cell membrane</keyword>
<keyword id="KW-0472">Membrane</keyword>
<keyword id="KW-0732">Signal</keyword>
<keyword id="KW-0808">Transferase</keyword>
<keyword id="KW-0812">Transmembrane</keyword>
<keyword id="KW-1133">Transmembrane helix</keyword>
<organism>
    <name type="scientific">Staphylococcus aureus (strain MSSA476)</name>
    <dbReference type="NCBI Taxonomy" id="282459"/>
    <lineage>
        <taxon>Bacteria</taxon>
        <taxon>Bacillati</taxon>
        <taxon>Bacillota</taxon>
        <taxon>Bacilli</taxon>
        <taxon>Bacillales</taxon>
        <taxon>Staphylococcaceae</taxon>
        <taxon>Staphylococcus</taxon>
    </lineage>
</organism>
<dbReference type="EC" id="2.3.1.-"/>
<dbReference type="EMBL" id="BX571857">
    <property type="protein sequence ID" value="CAG44267.1"/>
    <property type="molecule type" value="Genomic_DNA"/>
</dbReference>
<dbReference type="KEGG" id="sas:SAS2451"/>
<dbReference type="HOGENOM" id="CLU_133300_0_0_9"/>
<dbReference type="UniPathway" id="UPA00029">
    <property type="reaction ID" value="UER00560"/>
</dbReference>
<dbReference type="GO" id="GO:0005886">
    <property type="term" value="C:plasma membrane"/>
    <property type="evidence" value="ECO:0007669"/>
    <property type="project" value="UniProtKB-SubCell"/>
</dbReference>
<dbReference type="GO" id="GO:0016746">
    <property type="term" value="F:acyltransferase activity"/>
    <property type="evidence" value="ECO:0007669"/>
    <property type="project" value="UniProtKB-KW"/>
</dbReference>
<dbReference type="GO" id="GO:0016117">
    <property type="term" value="P:carotenoid biosynthetic process"/>
    <property type="evidence" value="ECO:0007669"/>
    <property type="project" value="UniProtKB-KW"/>
</dbReference>
<dbReference type="InterPro" id="IPR044021">
    <property type="entry name" value="CrtO"/>
</dbReference>
<dbReference type="Pfam" id="PF18927">
    <property type="entry name" value="CrtO"/>
    <property type="match status" value="1"/>
</dbReference>
<accession>Q6G6A9</accession>
<gene>
    <name type="primary">crtO</name>
    <name type="ordered locus">SAS2451</name>
</gene>
<sequence>MKTMKKYIKTAFFCSMYWLIVQLNIANLGTRIPDKYFRQKYIIFKSFNFEKHGKFWNKWFYVRKWKHKILDGHQLNQNIYDQRHLMTINTDEIEKMIIETKRAELIHWISILPVIIFNKGPRLVKYINIFYAMIANVPIIIVQRYNRPRLTQLLRILKRRGERHD</sequence>
<name>CRTO_STAAS</name>